<name>ALR_AZOSB</name>
<comment type="function">
    <text evidence="1">Catalyzes the interconversion of L-alanine and D-alanine. May also act on other amino acids.</text>
</comment>
<comment type="catalytic activity">
    <reaction evidence="1">
        <text>L-alanine = D-alanine</text>
        <dbReference type="Rhea" id="RHEA:20249"/>
        <dbReference type="ChEBI" id="CHEBI:57416"/>
        <dbReference type="ChEBI" id="CHEBI:57972"/>
        <dbReference type="EC" id="5.1.1.1"/>
    </reaction>
</comment>
<comment type="cofactor">
    <cofactor evidence="1">
        <name>pyridoxal 5'-phosphate</name>
        <dbReference type="ChEBI" id="CHEBI:597326"/>
    </cofactor>
</comment>
<comment type="pathway">
    <text evidence="1">Amino-acid biosynthesis; D-alanine biosynthesis; D-alanine from L-alanine: step 1/1.</text>
</comment>
<comment type="similarity">
    <text evidence="1">Belongs to the alanine racemase family.</text>
</comment>
<keyword id="KW-0413">Isomerase</keyword>
<keyword id="KW-0663">Pyridoxal phosphate</keyword>
<keyword id="KW-1185">Reference proteome</keyword>
<dbReference type="EC" id="5.1.1.1" evidence="1"/>
<dbReference type="EMBL" id="AM406670">
    <property type="protein sequence ID" value="CAL96541.1"/>
    <property type="molecule type" value="Genomic_DNA"/>
</dbReference>
<dbReference type="RefSeq" id="WP_011767647.1">
    <property type="nucleotide sequence ID" value="NC_008702.1"/>
</dbReference>
<dbReference type="SMR" id="A1KCI5"/>
<dbReference type="STRING" id="62928.azo3925"/>
<dbReference type="KEGG" id="azo:azo3925"/>
<dbReference type="eggNOG" id="COG0787">
    <property type="taxonomic scope" value="Bacteria"/>
</dbReference>
<dbReference type="HOGENOM" id="CLU_028393_1_0_4"/>
<dbReference type="UniPathway" id="UPA00042">
    <property type="reaction ID" value="UER00497"/>
</dbReference>
<dbReference type="Proteomes" id="UP000002588">
    <property type="component" value="Chromosome"/>
</dbReference>
<dbReference type="GO" id="GO:0005829">
    <property type="term" value="C:cytosol"/>
    <property type="evidence" value="ECO:0007669"/>
    <property type="project" value="TreeGrafter"/>
</dbReference>
<dbReference type="GO" id="GO:0008784">
    <property type="term" value="F:alanine racemase activity"/>
    <property type="evidence" value="ECO:0007669"/>
    <property type="project" value="UniProtKB-UniRule"/>
</dbReference>
<dbReference type="GO" id="GO:0030170">
    <property type="term" value="F:pyridoxal phosphate binding"/>
    <property type="evidence" value="ECO:0007669"/>
    <property type="project" value="UniProtKB-UniRule"/>
</dbReference>
<dbReference type="GO" id="GO:0030632">
    <property type="term" value="P:D-alanine biosynthetic process"/>
    <property type="evidence" value="ECO:0007669"/>
    <property type="project" value="UniProtKB-UniRule"/>
</dbReference>
<dbReference type="CDD" id="cd06827">
    <property type="entry name" value="PLPDE_III_AR_proteobact"/>
    <property type="match status" value="1"/>
</dbReference>
<dbReference type="FunFam" id="3.20.20.10:FF:000002">
    <property type="entry name" value="Alanine racemase"/>
    <property type="match status" value="1"/>
</dbReference>
<dbReference type="Gene3D" id="3.20.20.10">
    <property type="entry name" value="Alanine racemase"/>
    <property type="match status" value="1"/>
</dbReference>
<dbReference type="Gene3D" id="2.40.37.10">
    <property type="entry name" value="Lyase, Ornithine Decarboxylase, Chain A, domain 1"/>
    <property type="match status" value="1"/>
</dbReference>
<dbReference type="HAMAP" id="MF_01201">
    <property type="entry name" value="Ala_racemase"/>
    <property type="match status" value="1"/>
</dbReference>
<dbReference type="InterPro" id="IPR000821">
    <property type="entry name" value="Ala_racemase"/>
</dbReference>
<dbReference type="InterPro" id="IPR009006">
    <property type="entry name" value="Ala_racemase/Decarboxylase_C"/>
</dbReference>
<dbReference type="InterPro" id="IPR011079">
    <property type="entry name" value="Ala_racemase_C"/>
</dbReference>
<dbReference type="InterPro" id="IPR001608">
    <property type="entry name" value="Ala_racemase_N"/>
</dbReference>
<dbReference type="InterPro" id="IPR020622">
    <property type="entry name" value="Ala_racemase_pyridoxalP-BS"/>
</dbReference>
<dbReference type="InterPro" id="IPR029066">
    <property type="entry name" value="PLP-binding_barrel"/>
</dbReference>
<dbReference type="NCBIfam" id="TIGR00492">
    <property type="entry name" value="alr"/>
    <property type="match status" value="1"/>
</dbReference>
<dbReference type="PANTHER" id="PTHR30511">
    <property type="entry name" value="ALANINE RACEMASE"/>
    <property type="match status" value="1"/>
</dbReference>
<dbReference type="PANTHER" id="PTHR30511:SF0">
    <property type="entry name" value="ALANINE RACEMASE, CATABOLIC-RELATED"/>
    <property type="match status" value="1"/>
</dbReference>
<dbReference type="Pfam" id="PF00842">
    <property type="entry name" value="Ala_racemase_C"/>
    <property type="match status" value="1"/>
</dbReference>
<dbReference type="Pfam" id="PF01168">
    <property type="entry name" value="Ala_racemase_N"/>
    <property type="match status" value="1"/>
</dbReference>
<dbReference type="PRINTS" id="PR00992">
    <property type="entry name" value="ALARACEMASE"/>
</dbReference>
<dbReference type="SMART" id="SM01005">
    <property type="entry name" value="Ala_racemase_C"/>
    <property type="match status" value="1"/>
</dbReference>
<dbReference type="SUPFAM" id="SSF50621">
    <property type="entry name" value="Alanine racemase C-terminal domain-like"/>
    <property type="match status" value="1"/>
</dbReference>
<dbReference type="SUPFAM" id="SSF51419">
    <property type="entry name" value="PLP-binding barrel"/>
    <property type="match status" value="1"/>
</dbReference>
<dbReference type="PROSITE" id="PS00395">
    <property type="entry name" value="ALANINE_RACEMASE"/>
    <property type="match status" value="1"/>
</dbReference>
<reference key="1">
    <citation type="journal article" date="2006" name="Nat. Biotechnol.">
        <title>Complete genome of the mutualistic, N2-fixing grass endophyte Azoarcus sp. strain BH72.</title>
        <authorList>
            <person name="Krause A."/>
            <person name="Ramakumar A."/>
            <person name="Bartels D."/>
            <person name="Battistoni F."/>
            <person name="Bekel T."/>
            <person name="Boch J."/>
            <person name="Boehm M."/>
            <person name="Friedrich F."/>
            <person name="Hurek T."/>
            <person name="Krause L."/>
            <person name="Linke B."/>
            <person name="McHardy A.C."/>
            <person name="Sarkar A."/>
            <person name="Schneiker S."/>
            <person name="Syed A.A."/>
            <person name="Thauer R."/>
            <person name="Vorhoelter F.-J."/>
            <person name="Weidner S."/>
            <person name="Puehler A."/>
            <person name="Reinhold-Hurek B."/>
            <person name="Kaiser O."/>
            <person name="Goesmann A."/>
        </authorList>
    </citation>
    <scope>NUCLEOTIDE SEQUENCE [LARGE SCALE GENOMIC DNA]</scope>
    <source>
        <strain>BH72</strain>
    </source>
</reference>
<proteinExistence type="inferred from homology"/>
<protein>
    <recommendedName>
        <fullName evidence="1">Alanine racemase</fullName>
        <ecNumber evidence="1">5.1.1.1</ecNumber>
    </recommendedName>
</protein>
<feature type="chain" id="PRO_1000065969" description="Alanine racemase">
    <location>
        <begin position="1"/>
        <end position="353"/>
    </location>
</feature>
<feature type="active site" description="Proton acceptor; specific for D-alanine" evidence="1">
    <location>
        <position position="33"/>
    </location>
</feature>
<feature type="active site" description="Proton acceptor; specific for L-alanine" evidence="1">
    <location>
        <position position="250"/>
    </location>
</feature>
<feature type="binding site" evidence="1">
    <location>
        <position position="129"/>
    </location>
    <ligand>
        <name>substrate</name>
    </ligand>
</feature>
<feature type="binding site" evidence="1">
    <location>
        <position position="298"/>
    </location>
    <ligand>
        <name>substrate</name>
    </ligand>
</feature>
<feature type="modified residue" description="N6-(pyridoxal phosphate)lysine" evidence="1">
    <location>
        <position position="33"/>
    </location>
</feature>
<gene>
    <name type="primary">alr</name>
    <name type="ordered locus">azo3925</name>
</gene>
<organism>
    <name type="scientific">Azoarcus sp. (strain BH72)</name>
    <dbReference type="NCBI Taxonomy" id="418699"/>
    <lineage>
        <taxon>Bacteria</taxon>
        <taxon>Pseudomonadati</taxon>
        <taxon>Pseudomonadota</taxon>
        <taxon>Betaproteobacteria</taxon>
        <taxon>Rhodocyclales</taxon>
        <taxon>Zoogloeaceae</taxon>
        <taxon>Azoarcus</taxon>
    </lineage>
</organism>
<sequence>MRPATALIDLDALRHNYRLARSRHGGRALAVVKANAYGHGAVRCAQALAAEADGFAVAFLDEALELRAAGITQTIVLLEGVFDAAELEQVVAHGLWPVVHHAAQIEMIEQAALARPLDIWLKVNSGMNRAGFVGDAVGSAWQRLRASGKVGEITLMTHFARADEPQVIATAEQLADFDTATRGLPGPRSLANSAAVLGWPDAHADWARPGILLYGADPMPGEGNGLQPVMTLESGVIAVRDLAAGAPLGYGARYVAERPRRIGLVAMGYADGYPRSAPDGTPVVVDGQPSMLVGRVSMDMLTVDLTDLPQAGIGSRVELWGRQVPINQVAAGAGTIAYELLCNVKRVVFRYRG</sequence>
<evidence type="ECO:0000255" key="1">
    <source>
        <dbReference type="HAMAP-Rule" id="MF_01201"/>
    </source>
</evidence>
<accession>A1KCI5</accession>